<proteinExistence type="predicted"/>
<geneLocation type="mitochondrion"/>
<protein>
    <recommendedName>
        <fullName>Uncharacterized mitochondrial protein AtMg01030</fullName>
    </recommendedName>
    <alternativeName>
        <fullName>ORF106e</fullName>
    </alternativeName>
</protein>
<name>M1030_ARATH</name>
<feature type="chain" id="PRO_0000196807" description="Uncharacterized mitochondrial protein AtMg01030">
    <location>
        <begin position="1"/>
        <end position="106"/>
    </location>
</feature>
<feature type="region of interest" description="Disordered" evidence="1">
    <location>
        <begin position="38"/>
        <end position="106"/>
    </location>
</feature>
<feature type="compositionally biased region" description="Basic and acidic residues" evidence="1">
    <location>
        <begin position="57"/>
        <end position="71"/>
    </location>
</feature>
<feature type="compositionally biased region" description="Basic and acidic residues" evidence="1">
    <location>
        <begin position="82"/>
        <end position="96"/>
    </location>
</feature>
<feature type="sequence conflict" description="In Ref. 3; AAM15417 and 4; AEC06067." evidence="2" ref="3 4">
    <original>T</original>
    <variation>M</variation>
    <location>
        <position position="47"/>
    </location>
</feature>
<feature type="sequence conflict" description="In Ref. 3; AAM15512." evidence="2" ref="3">
    <original>R</original>
    <variation>H</variation>
    <location>
        <position position="69"/>
    </location>
</feature>
<comment type="subcellular location">
    <subcellularLocation>
        <location evidence="2">Mitochondrion</location>
    </subcellularLocation>
</comment>
<comment type="miscellaneous">
    <text>A stretch of 270 kb of the mitochondrial genome is duplicated within the centromere of chromosome 2 resulting in the duplication of the gene. The expression of this duplicated gene (At2g07673) is not demonstrated.</text>
</comment>
<evidence type="ECO:0000256" key="1">
    <source>
        <dbReference type="SAM" id="MobiDB-lite"/>
    </source>
</evidence>
<evidence type="ECO:0000305" key="2"/>
<evidence type="ECO:0000312" key="3">
    <source>
        <dbReference type="Araport" id="AT2G07673"/>
    </source>
</evidence>
<evidence type="ECO:0000312" key="4">
    <source>
        <dbReference type="Araport" id="ATMG01030"/>
    </source>
</evidence>
<sequence>MQQVFRREGINLYYYSNKTKKFSLDSWYLPQLHLLESKGNKKSKAATDQYFIHPSRTRQERDLTDRKHRPEQQQLQRRVTRWKKEVTTRSRPKETSSTHLPYHGSY</sequence>
<keyword id="KW-0496">Mitochondrion</keyword>
<keyword id="KW-1185">Reference proteome</keyword>
<organism>
    <name type="scientific">Arabidopsis thaliana</name>
    <name type="common">Mouse-ear cress</name>
    <dbReference type="NCBI Taxonomy" id="3702"/>
    <lineage>
        <taxon>Eukaryota</taxon>
        <taxon>Viridiplantae</taxon>
        <taxon>Streptophyta</taxon>
        <taxon>Embryophyta</taxon>
        <taxon>Tracheophyta</taxon>
        <taxon>Spermatophyta</taxon>
        <taxon>Magnoliopsida</taxon>
        <taxon>eudicotyledons</taxon>
        <taxon>Gunneridae</taxon>
        <taxon>Pentapetalae</taxon>
        <taxon>rosids</taxon>
        <taxon>malvids</taxon>
        <taxon>Brassicales</taxon>
        <taxon>Brassicaceae</taxon>
        <taxon>Camelineae</taxon>
        <taxon>Arabidopsis</taxon>
    </lineage>
</organism>
<gene>
    <name evidence="4" type="ordered locus">AtMg01030</name>
</gene>
<gene>
    <name evidence="3" type="ordered locus">At2g07673</name>
</gene>
<reference key="1">
    <citation type="journal article" date="1997" name="Nat. Genet.">
        <title>The mitochondrial genome of Arabidopsis thaliana contains 57 genes in 366,924 nucleotides.</title>
        <authorList>
            <person name="Unseld M."/>
            <person name="Marienfeld J.R."/>
            <person name="Brandt P."/>
            <person name="Brennicke A."/>
        </authorList>
    </citation>
    <scope>NUCLEOTIDE SEQUENCE [LARGE SCALE GENOMIC DNA]</scope>
    <source>
        <strain>cv. C24</strain>
    </source>
</reference>
<reference key="2">
    <citation type="journal article" date="2018" name="Plant Cell">
        <title>Correction of persistent errors in Arabidopsis reference mitochondrial genomes.</title>
        <authorList>
            <person name="Sloan D.B."/>
            <person name="Wu Z."/>
            <person name="Sharbrough J."/>
        </authorList>
    </citation>
    <scope>NUCLEOTIDE SEQUENCE [LARGE SCALE GENOMIC DNA]</scope>
    <source>
        <strain>cv. Columbia</strain>
    </source>
</reference>
<reference key="3">
    <citation type="journal article" date="1999" name="Nature">
        <title>Sequence and analysis of chromosome 2 of the plant Arabidopsis thaliana.</title>
        <authorList>
            <person name="Lin X."/>
            <person name="Kaul S."/>
            <person name="Rounsley S.D."/>
            <person name="Shea T.P."/>
            <person name="Benito M.-I."/>
            <person name="Town C.D."/>
            <person name="Fujii C.Y."/>
            <person name="Mason T.M."/>
            <person name="Bowman C.L."/>
            <person name="Barnstead M.E."/>
            <person name="Feldblyum T.V."/>
            <person name="Buell C.R."/>
            <person name="Ketchum K.A."/>
            <person name="Lee J.J."/>
            <person name="Ronning C.M."/>
            <person name="Koo H.L."/>
            <person name="Moffat K.S."/>
            <person name="Cronin L.A."/>
            <person name="Shen M."/>
            <person name="Pai G."/>
            <person name="Van Aken S."/>
            <person name="Umayam L."/>
            <person name="Tallon L.J."/>
            <person name="Gill J.E."/>
            <person name="Adams M.D."/>
            <person name="Carrera A.J."/>
            <person name="Creasy T.H."/>
            <person name="Goodman H.M."/>
            <person name="Somerville C.R."/>
            <person name="Copenhaver G.P."/>
            <person name="Preuss D."/>
            <person name="Nierman W.C."/>
            <person name="White O."/>
            <person name="Eisen J.A."/>
            <person name="Salzberg S.L."/>
            <person name="Fraser C.M."/>
            <person name="Venter J.C."/>
        </authorList>
    </citation>
    <scope>NUCLEOTIDE SEQUENCE [LARGE SCALE GENOMIC DNA] (AT2G07673)</scope>
    <source>
        <strain>cv. Columbia</strain>
    </source>
</reference>
<reference key="4">
    <citation type="journal article" date="2017" name="Plant J.">
        <title>Araport11: a complete reannotation of the Arabidopsis thaliana reference genome.</title>
        <authorList>
            <person name="Cheng C.Y."/>
            <person name="Krishnakumar V."/>
            <person name="Chan A.P."/>
            <person name="Thibaud-Nissen F."/>
            <person name="Schobel S."/>
            <person name="Town C.D."/>
        </authorList>
    </citation>
    <scope>GENOME REANNOTATION</scope>
    <scope>SEQUENCE REVISION (AT2G07673)</scope>
    <source>
        <strain>cv. Columbia</strain>
    </source>
</reference>
<dbReference type="EMBL" id="Y08501">
    <property type="protein sequence ID" value="CAA69789.1"/>
    <property type="molecule type" value="Genomic_DNA"/>
</dbReference>
<dbReference type="EMBL" id="BK010421">
    <property type="status" value="NOT_ANNOTATED_CDS"/>
    <property type="molecule type" value="Genomic_DNA"/>
</dbReference>
<dbReference type="EMBL" id="AC007143">
    <property type="protein sequence ID" value="AAM15417.1"/>
    <property type="molecule type" value="Genomic_DNA"/>
</dbReference>
<dbReference type="EMBL" id="AC007730">
    <property type="protein sequence ID" value="AAM15512.1"/>
    <property type="molecule type" value="Genomic_DNA"/>
</dbReference>
<dbReference type="EMBL" id="CP002685">
    <property type="protein sequence ID" value="AEC06067.1"/>
    <property type="molecule type" value="Genomic_DNA"/>
</dbReference>
<dbReference type="RefSeq" id="NP_085557.1">
    <property type="nucleotide sequence ID" value="NC_001284.2"/>
</dbReference>
<dbReference type="RefSeq" id="NP_565340.1">
    <property type="nucleotide sequence ID" value="NM_126730.3"/>
</dbReference>
<dbReference type="SMR" id="P92537"/>
<dbReference type="PaxDb" id="3702-ATMG01030.1"/>
<dbReference type="EnsemblPlants" id="ATMG01030.1">
    <property type="protein sequence ID" value="ATMG01030.1"/>
    <property type="gene ID" value="ATMG01030"/>
</dbReference>
<dbReference type="GeneID" id="815345"/>
<dbReference type="Gramene" id="ATMG01030.1">
    <property type="protein sequence ID" value="ATMG01030.1"/>
    <property type="gene ID" value="ATMG01030"/>
</dbReference>
<dbReference type="KEGG" id="ath:AT2G07673"/>
<dbReference type="Araport" id="AT2G07673"/>
<dbReference type="Araport" id="ATMG01030"/>
<dbReference type="TAIR" id="AT2G07673"/>
<dbReference type="TAIR" id="ATMG01030">
    <property type="gene designation" value="ORF106E"/>
</dbReference>
<dbReference type="HOGENOM" id="CLU_2226856_0_0_1"/>
<dbReference type="InParanoid" id="P92537"/>
<dbReference type="OrthoDB" id="1030133at2759"/>
<dbReference type="PRO" id="PR:P92537"/>
<dbReference type="Proteomes" id="UP000006548">
    <property type="component" value="Chromosome 2"/>
</dbReference>
<dbReference type="Proteomes" id="UP000006548">
    <property type="component" value="Mitochondrion MT"/>
</dbReference>
<dbReference type="ExpressionAtlas" id="P92537">
    <property type="expression patterns" value="baseline and differential"/>
</dbReference>
<dbReference type="GO" id="GO:0005739">
    <property type="term" value="C:mitochondrion"/>
    <property type="evidence" value="ECO:0007669"/>
    <property type="project" value="UniProtKB-SubCell"/>
</dbReference>
<accession>P92537</accession>
<accession>Q1ZXX7</accession>
<accession>Q27GM3</accession>
<accession>Q8S877</accession>
<accession>Q8S8C4</accession>